<protein>
    <recommendedName>
        <fullName evidence="1">Large ribosomal subunit protein uL22</fullName>
    </recommendedName>
    <alternativeName>
        <fullName evidence="2">50S ribosomal protein L22</fullName>
    </alternativeName>
</protein>
<gene>
    <name evidence="1" type="primary">rplV</name>
    <name type="ordered locus">SAG0063</name>
</gene>
<sequence>MAEITSAKAMARTVRVSPRKTRLVLDLIRGKNVADAIAILKFTPNKAARVIEKTLNSAIANAENNFGLEKANLVVSETFANEGPTMKRFRPRAKGSASPINKRTTHVTVVVSEK</sequence>
<name>RL22_STRA5</name>
<dbReference type="EMBL" id="AE009948">
    <property type="protein sequence ID" value="AAM98971.1"/>
    <property type="molecule type" value="Genomic_DNA"/>
</dbReference>
<dbReference type="RefSeq" id="NP_687099.1">
    <property type="nucleotide sequence ID" value="NC_004116.1"/>
</dbReference>
<dbReference type="RefSeq" id="WP_000818141.1">
    <property type="nucleotide sequence ID" value="NC_004116.1"/>
</dbReference>
<dbReference type="SMR" id="Q8E2C7"/>
<dbReference type="STRING" id="208435.SAG0063"/>
<dbReference type="GeneID" id="66885023"/>
<dbReference type="KEGG" id="sag:SAG0063"/>
<dbReference type="PATRIC" id="fig|208435.3.peg.62"/>
<dbReference type="HOGENOM" id="CLU_083987_3_3_9"/>
<dbReference type="OrthoDB" id="9805969at2"/>
<dbReference type="Proteomes" id="UP000000821">
    <property type="component" value="Chromosome"/>
</dbReference>
<dbReference type="GO" id="GO:0022625">
    <property type="term" value="C:cytosolic large ribosomal subunit"/>
    <property type="evidence" value="ECO:0007669"/>
    <property type="project" value="TreeGrafter"/>
</dbReference>
<dbReference type="GO" id="GO:0019843">
    <property type="term" value="F:rRNA binding"/>
    <property type="evidence" value="ECO:0007669"/>
    <property type="project" value="UniProtKB-UniRule"/>
</dbReference>
<dbReference type="GO" id="GO:0003735">
    <property type="term" value="F:structural constituent of ribosome"/>
    <property type="evidence" value="ECO:0007669"/>
    <property type="project" value="InterPro"/>
</dbReference>
<dbReference type="GO" id="GO:0006412">
    <property type="term" value="P:translation"/>
    <property type="evidence" value="ECO:0007669"/>
    <property type="project" value="UniProtKB-UniRule"/>
</dbReference>
<dbReference type="CDD" id="cd00336">
    <property type="entry name" value="Ribosomal_L22"/>
    <property type="match status" value="1"/>
</dbReference>
<dbReference type="FunFam" id="3.90.470.10:FF:000001">
    <property type="entry name" value="50S ribosomal protein L22"/>
    <property type="match status" value="1"/>
</dbReference>
<dbReference type="Gene3D" id="3.90.470.10">
    <property type="entry name" value="Ribosomal protein L22/L17"/>
    <property type="match status" value="1"/>
</dbReference>
<dbReference type="HAMAP" id="MF_01331_B">
    <property type="entry name" value="Ribosomal_uL22_B"/>
    <property type="match status" value="1"/>
</dbReference>
<dbReference type="InterPro" id="IPR001063">
    <property type="entry name" value="Ribosomal_uL22"/>
</dbReference>
<dbReference type="InterPro" id="IPR005727">
    <property type="entry name" value="Ribosomal_uL22_bac/chlpt-type"/>
</dbReference>
<dbReference type="InterPro" id="IPR047867">
    <property type="entry name" value="Ribosomal_uL22_bac/org-type"/>
</dbReference>
<dbReference type="InterPro" id="IPR018260">
    <property type="entry name" value="Ribosomal_uL22_CS"/>
</dbReference>
<dbReference type="InterPro" id="IPR036394">
    <property type="entry name" value="Ribosomal_uL22_sf"/>
</dbReference>
<dbReference type="NCBIfam" id="TIGR01044">
    <property type="entry name" value="rplV_bact"/>
    <property type="match status" value="1"/>
</dbReference>
<dbReference type="PANTHER" id="PTHR13501">
    <property type="entry name" value="CHLOROPLAST 50S RIBOSOMAL PROTEIN L22-RELATED"/>
    <property type="match status" value="1"/>
</dbReference>
<dbReference type="PANTHER" id="PTHR13501:SF8">
    <property type="entry name" value="LARGE RIBOSOMAL SUBUNIT PROTEIN UL22M"/>
    <property type="match status" value="1"/>
</dbReference>
<dbReference type="Pfam" id="PF00237">
    <property type="entry name" value="Ribosomal_L22"/>
    <property type="match status" value="1"/>
</dbReference>
<dbReference type="SUPFAM" id="SSF54843">
    <property type="entry name" value="Ribosomal protein L22"/>
    <property type="match status" value="1"/>
</dbReference>
<dbReference type="PROSITE" id="PS00464">
    <property type="entry name" value="RIBOSOMAL_L22"/>
    <property type="match status" value="1"/>
</dbReference>
<evidence type="ECO:0000255" key="1">
    <source>
        <dbReference type="HAMAP-Rule" id="MF_01331"/>
    </source>
</evidence>
<evidence type="ECO:0000305" key="2"/>
<feature type="chain" id="PRO_0000125232" description="Large ribosomal subunit protein uL22">
    <location>
        <begin position="1"/>
        <end position="114"/>
    </location>
</feature>
<comment type="function">
    <text evidence="1">This protein binds specifically to 23S rRNA; its binding is stimulated by other ribosomal proteins, e.g. L4, L17, and L20. It is important during the early stages of 50S assembly. It makes multiple contacts with different domains of the 23S rRNA in the assembled 50S subunit and ribosome (By similarity).</text>
</comment>
<comment type="function">
    <text evidence="1">The globular domain of the protein is located near the polypeptide exit tunnel on the outside of the subunit, while an extended beta-hairpin is found that lines the wall of the exit tunnel in the center of the 70S ribosome.</text>
</comment>
<comment type="subunit">
    <text evidence="1">Part of the 50S ribosomal subunit.</text>
</comment>
<comment type="similarity">
    <text evidence="1">Belongs to the universal ribosomal protein uL22 family.</text>
</comment>
<keyword id="KW-1185">Reference proteome</keyword>
<keyword id="KW-0687">Ribonucleoprotein</keyword>
<keyword id="KW-0689">Ribosomal protein</keyword>
<keyword id="KW-0694">RNA-binding</keyword>
<keyword id="KW-0699">rRNA-binding</keyword>
<reference key="1">
    <citation type="journal article" date="2002" name="Proc. Natl. Acad. Sci. U.S.A.">
        <title>Complete genome sequence and comparative genomic analysis of an emerging human pathogen, serotype V Streptococcus agalactiae.</title>
        <authorList>
            <person name="Tettelin H."/>
            <person name="Masignani V."/>
            <person name="Cieslewicz M.J."/>
            <person name="Eisen J.A."/>
            <person name="Peterson S.N."/>
            <person name="Wessels M.R."/>
            <person name="Paulsen I.T."/>
            <person name="Nelson K.E."/>
            <person name="Margarit I."/>
            <person name="Read T.D."/>
            <person name="Madoff L.C."/>
            <person name="Wolf A.M."/>
            <person name="Beanan M.J."/>
            <person name="Brinkac L.M."/>
            <person name="Daugherty S.C."/>
            <person name="DeBoy R.T."/>
            <person name="Durkin A.S."/>
            <person name="Kolonay J.F."/>
            <person name="Madupu R."/>
            <person name="Lewis M.R."/>
            <person name="Radune D."/>
            <person name="Fedorova N.B."/>
            <person name="Scanlan D."/>
            <person name="Khouri H.M."/>
            <person name="Mulligan S."/>
            <person name="Carty H.A."/>
            <person name="Cline R.T."/>
            <person name="Van Aken S.E."/>
            <person name="Gill J."/>
            <person name="Scarselli M."/>
            <person name="Mora M."/>
            <person name="Iacobini E.T."/>
            <person name="Brettoni C."/>
            <person name="Galli G."/>
            <person name="Mariani M."/>
            <person name="Vegni F."/>
            <person name="Maione D."/>
            <person name="Rinaudo D."/>
            <person name="Rappuoli R."/>
            <person name="Telford J.L."/>
            <person name="Kasper D.L."/>
            <person name="Grandi G."/>
            <person name="Fraser C.M."/>
        </authorList>
    </citation>
    <scope>NUCLEOTIDE SEQUENCE [LARGE SCALE GENOMIC DNA]</scope>
    <source>
        <strain>ATCC BAA-611 / 2603 V/R</strain>
    </source>
</reference>
<proteinExistence type="inferred from homology"/>
<accession>Q8E2C7</accession>
<organism>
    <name type="scientific">Streptococcus agalactiae serotype V (strain ATCC BAA-611 / 2603 V/R)</name>
    <dbReference type="NCBI Taxonomy" id="208435"/>
    <lineage>
        <taxon>Bacteria</taxon>
        <taxon>Bacillati</taxon>
        <taxon>Bacillota</taxon>
        <taxon>Bacilli</taxon>
        <taxon>Lactobacillales</taxon>
        <taxon>Streptococcaceae</taxon>
        <taxon>Streptococcus</taxon>
    </lineage>
</organism>